<sequence length="547" mass="62217">MAVISLMFLAVMYVVHHPLMVSDRMDLDTLARSRQLEKRMSEEMRQLEMEFEERSRAAEQKQKVENFWRGDTSSDQLVLGKKDMGWPFQAGGQDGGPLGWILGNLWNAGLFCLFLIFELLRQSMQHEPAFESSSEEEEEEIRVVPVSSYTRLSDFPSQEALEAFYKHYIQNAIRDLPCTCEFVESFVDDLIEACRVLSRREAHPQLEDCLGFGAAFEKWGTLHETQNFDVLVPIVPPQGTMFILEMRDPALGRRCGCVKVDSECMCKHEKLLGDVLCLVHHRDHSAMLSKCTSSIKAALCTSSHLDVCKTVQWFRNMVSNAWALVAHKYDFKLTFPPSTTSCKLRLGYRSGRSLSISLVLGVQREDTLVYLVSQAPEQEQLTSVDWPESFAACEHLFLKLVGRFAPENTCHLKCLQIVLSLQDHQILPPGASRPILTSYHFKTALMHLLLRLPLTDWQHSMLSLRLQDLLWFLGRGLQQRSLHHFLIGNTYLPLTIPIPKAFRNAEPVNLFQHLVLNPVAHSQAVEEFHNLLAQVKTLPCSPVAGGL</sequence>
<name>IPIL1_MOUSE</name>
<feature type="signal peptide" evidence="2">
    <location>
        <begin position="1"/>
        <end position="22"/>
    </location>
</feature>
<feature type="chain" id="PRO_0000320567" description="Inositol 1,4,5-trisphosphate receptor-interacting protein-like 1">
    <location>
        <begin position="23"/>
        <end position="547"/>
    </location>
</feature>
<feature type="topological domain" description="Extracellular" evidence="2">
    <location>
        <begin position="23"/>
        <end position="96"/>
    </location>
</feature>
<feature type="transmembrane region" description="Helical" evidence="2">
    <location>
        <begin position="97"/>
        <end position="117"/>
    </location>
</feature>
<feature type="topological domain" description="Cytoplasmic" evidence="2">
    <location>
        <begin position="118"/>
        <end position="547"/>
    </location>
</feature>
<feature type="coiled-coil region" evidence="2">
    <location>
        <begin position="28"/>
        <end position="66"/>
    </location>
</feature>
<keyword id="KW-1003">Cell membrane</keyword>
<keyword id="KW-0175">Coiled coil</keyword>
<keyword id="KW-0472">Membrane</keyword>
<keyword id="KW-1185">Reference proteome</keyword>
<keyword id="KW-0732">Signal</keyword>
<keyword id="KW-0812">Transmembrane</keyword>
<keyword id="KW-1133">Transmembrane helix</keyword>
<reference key="1">
    <citation type="journal article" date="2009" name="PLoS Biol.">
        <title>Lineage-specific biology revealed by a finished genome assembly of the mouse.</title>
        <authorList>
            <person name="Church D.M."/>
            <person name="Goodstadt L."/>
            <person name="Hillier L.W."/>
            <person name="Zody M.C."/>
            <person name="Goldstein S."/>
            <person name="She X."/>
            <person name="Bult C.J."/>
            <person name="Agarwala R."/>
            <person name="Cherry J.L."/>
            <person name="DiCuccio M."/>
            <person name="Hlavina W."/>
            <person name="Kapustin Y."/>
            <person name="Meric P."/>
            <person name="Maglott D."/>
            <person name="Birtle Z."/>
            <person name="Marques A.C."/>
            <person name="Graves T."/>
            <person name="Zhou S."/>
            <person name="Teague B."/>
            <person name="Potamousis K."/>
            <person name="Churas C."/>
            <person name="Place M."/>
            <person name="Herschleb J."/>
            <person name="Runnheim R."/>
            <person name="Forrest D."/>
            <person name="Amos-Landgraf J."/>
            <person name="Schwartz D.C."/>
            <person name="Cheng Z."/>
            <person name="Lindblad-Toh K."/>
            <person name="Eichler E.E."/>
            <person name="Ponting C.P."/>
        </authorList>
    </citation>
    <scope>NUCLEOTIDE SEQUENCE [LARGE SCALE GENOMIC DNA]</scope>
    <source>
        <strain>C57BL/6J</strain>
    </source>
</reference>
<reference key="2">
    <citation type="journal article" date="2004" name="Genome Res.">
        <title>The status, quality, and expansion of the NIH full-length cDNA project: the Mammalian Gene Collection (MGC).</title>
        <authorList>
            <consortium name="The MGC Project Team"/>
        </authorList>
    </citation>
    <scope>NUCLEOTIDE SEQUENCE [LARGE SCALE MRNA]</scope>
</reference>
<accession>A2ASA8</accession>
<accession>A1L3P2</accession>
<accession>B7ZCY2</accession>
<evidence type="ECO:0000250" key="1">
    <source>
        <dbReference type="UniProtKB" id="Q6GPH6"/>
    </source>
</evidence>
<evidence type="ECO:0000255" key="2"/>
<evidence type="ECO:0000305" key="3"/>
<protein>
    <recommendedName>
        <fullName>Inositol 1,4,5-trisphosphate receptor-interacting protein-like 1</fullName>
    </recommendedName>
</protein>
<proteinExistence type="evidence at transcript level"/>
<comment type="function">
    <text evidence="1">Functions as a ligand of CD3E, inhibiting TCR-CD3 complex signaling to regulate T cell activation. Induces stable CD3E-NCK1 binding, thereby preventing the CD3E-ZAP70 interaction and subsequently inhibiting the activation of the downstream ERK-NFkB signaling cascade and calcium influx.</text>
</comment>
<comment type="subcellular location">
    <subcellularLocation>
        <location evidence="1">Cell membrane</location>
        <topology evidence="2">Single-pass type I membrane protein</topology>
    </subcellularLocation>
</comment>
<comment type="similarity">
    <text evidence="3">Belongs to the ITPRIP family.</text>
</comment>
<organism>
    <name type="scientific">Mus musculus</name>
    <name type="common">Mouse</name>
    <dbReference type="NCBI Taxonomy" id="10090"/>
    <lineage>
        <taxon>Eukaryota</taxon>
        <taxon>Metazoa</taxon>
        <taxon>Chordata</taxon>
        <taxon>Craniata</taxon>
        <taxon>Vertebrata</taxon>
        <taxon>Euteleostomi</taxon>
        <taxon>Mammalia</taxon>
        <taxon>Eutheria</taxon>
        <taxon>Euarchontoglires</taxon>
        <taxon>Glires</taxon>
        <taxon>Rodentia</taxon>
        <taxon>Myomorpha</taxon>
        <taxon>Muroidea</taxon>
        <taxon>Muridae</taxon>
        <taxon>Murinae</taxon>
        <taxon>Mus</taxon>
        <taxon>Mus</taxon>
    </lineage>
</organism>
<dbReference type="EMBL" id="AL928590">
    <property type="status" value="NOT_ANNOTATED_CDS"/>
    <property type="molecule type" value="Genomic_DNA"/>
</dbReference>
<dbReference type="EMBL" id="BC130218">
    <property type="protein sequence ID" value="AAI30219.1"/>
    <property type="molecule type" value="mRNA"/>
</dbReference>
<dbReference type="CCDS" id="CCDS50701.1"/>
<dbReference type="RefSeq" id="NP_001156999.1">
    <property type="nucleotide sequence ID" value="NM_001163527.1"/>
</dbReference>
<dbReference type="RefSeq" id="NP_001157000.1">
    <property type="nucleotide sequence ID" value="NM_001163528.1"/>
</dbReference>
<dbReference type="BioGRID" id="215938">
    <property type="interactions" value="1"/>
</dbReference>
<dbReference type="FunCoup" id="A2ASA8">
    <property type="interactions" value="579"/>
</dbReference>
<dbReference type="STRING" id="10090.ENSMUSP00000106016"/>
<dbReference type="PhosphoSitePlus" id="A2ASA8"/>
<dbReference type="PaxDb" id="10090-ENSMUSP00000106016"/>
<dbReference type="ProteomicsDB" id="269076"/>
<dbReference type="Antibodypedia" id="3069">
    <property type="antibodies" value="98 antibodies from 18 providers"/>
</dbReference>
<dbReference type="Ensembl" id="ENSMUST00000110386.2">
    <property type="protein sequence ID" value="ENSMUSP00000106016.2"/>
    <property type="gene ID" value="ENSMUSG00000074825.5"/>
</dbReference>
<dbReference type="Ensembl" id="ENSMUST00000154021.2">
    <property type="protein sequence ID" value="ENSMUSP00000122289.2"/>
    <property type="gene ID" value="ENSMUSG00000074825.5"/>
</dbReference>
<dbReference type="GeneID" id="73338"/>
<dbReference type="KEGG" id="mmu:73338"/>
<dbReference type="UCSC" id="uc008meu.2">
    <property type="organism name" value="mouse"/>
</dbReference>
<dbReference type="AGR" id="MGI:1920588"/>
<dbReference type="CTD" id="150771"/>
<dbReference type="MGI" id="MGI:1920588">
    <property type="gene designation" value="Itpripl1"/>
</dbReference>
<dbReference type="VEuPathDB" id="HostDB:ENSMUSG00000074825"/>
<dbReference type="eggNOG" id="ENOG502RX8U">
    <property type="taxonomic scope" value="Eukaryota"/>
</dbReference>
<dbReference type="GeneTree" id="ENSGT01050000244827"/>
<dbReference type="HOGENOM" id="CLU_025485_2_0_1"/>
<dbReference type="InParanoid" id="A2ASA8"/>
<dbReference type="OMA" id="TSVHWPE"/>
<dbReference type="OrthoDB" id="9034619at2759"/>
<dbReference type="PhylomeDB" id="A2ASA8"/>
<dbReference type="TreeFam" id="TF332277"/>
<dbReference type="BioGRID-ORCS" id="73338">
    <property type="hits" value="1 hit in 77 CRISPR screens"/>
</dbReference>
<dbReference type="PRO" id="PR:A2ASA8"/>
<dbReference type="Proteomes" id="UP000000589">
    <property type="component" value="Chromosome 2"/>
</dbReference>
<dbReference type="RNAct" id="A2ASA8">
    <property type="molecule type" value="protein"/>
</dbReference>
<dbReference type="Bgee" id="ENSMUSG00000074825">
    <property type="expression patterns" value="Expressed in seminiferous tubule of testis and 71 other cell types or tissues"/>
</dbReference>
<dbReference type="ExpressionAtlas" id="A2ASA8">
    <property type="expression patterns" value="baseline and differential"/>
</dbReference>
<dbReference type="GO" id="GO:0005886">
    <property type="term" value="C:plasma membrane"/>
    <property type="evidence" value="ECO:0007669"/>
    <property type="project" value="UniProtKB-SubCell"/>
</dbReference>
<dbReference type="GO" id="GO:0048018">
    <property type="term" value="F:receptor ligand activity"/>
    <property type="evidence" value="ECO:0007669"/>
    <property type="project" value="Ensembl"/>
</dbReference>
<dbReference type="GO" id="GO:0070509">
    <property type="term" value="P:calcium ion import"/>
    <property type="evidence" value="ECO:0000315"/>
    <property type="project" value="MGI"/>
</dbReference>
<dbReference type="GO" id="GO:0050860">
    <property type="term" value="P:negative regulation of T cell receptor signaling pathway"/>
    <property type="evidence" value="ECO:0007669"/>
    <property type="project" value="Ensembl"/>
</dbReference>
<dbReference type="GO" id="GO:0042110">
    <property type="term" value="P:T cell activation"/>
    <property type="evidence" value="ECO:0000315"/>
    <property type="project" value="MGI"/>
</dbReference>
<dbReference type="GO" id="GO:0030217">
    <property type="term" value="P:T cell differentiation"/>
    <property type="evidence" value="ECO:0000315"/>
    <property type="project" value="MGI"/>
</dbReference>
<dbReference type="FunFam" id="1.10.1410.40:FF:000006">
    <property type="entry name" value="Inositol 1,4,5-trisphosphate receptor-interacting protein"/>
    <property type="match status" value="1"/>
</dbReference>
<dbReference type="Gene3D" id="1.10.1410.40">
    <property type="match status" value="1"/>
</dbReference>
<dbReference type="InterPro" id="IPR026250">
    <property type="entry name" value="ITPRIP-like"/>
</dbReference>
<dbReference type="InterPro" id="IPR046906">
    <property type="entry name" value="Mab-21_HhH/H2TH-like"/>
</dbReference>
<dbReference type="InterPro" id="IPR024810">
    <property type="entry name" value="MAB21L/cGLR"/>
</dbReference>
<dbReference type="PANTHER" id="PTHR10656">
    <property type="entry name" value="CELL FATE DETERMINING PROTEIN MAB21-RELATED"/>
    <property type="match status" value="1"/>
</dbReference>
<dbReference type="PANTHER" id="PTHR10656:SF40">
    <property type="entry name" value="INOSITOL 1,4,5-TRISPHOSPHATE RECEPTOR-INTERACTING PROTEIN-LIKE 1"/>
    <property type="match status" value="1"/>
</dbReference>
<dbReference type="Pfam" id="PF20266">
    <property type="entry name" value="Mab-21_C"/>
    <property type="match status" value="1"/>
</dbReference>
<dbReference type="PRINTS" id="PR02107">
    <property type="entry name" value="INOS145TPRIP"/>
</dbReference>
<dbReference type="SMART" id="SM01265">
    <property type="entry name" value="Mab-21"/>
    <property type="match status" value="1"/>
</dbReference>
<gene>
    <name type="primary">Itpripl1</name>
</gene>